<evidence type="ECO:0000250" key="1">
    <source>
        <dbReference type="UniProtKB" id="Q9D783"/>
    </source>
</evidence>
<evidence type="ECO:0000255" key="2">
    <source>
        <dbReference type="PROSITE-ProRule" id="PRU00037"/>
    </source>
</evidence>
<evidence type="ECO:0000256" key="3">
    <source>
        <dbReference type="SAM" id="MobiDB-lite"/>
    </source>
</evidence>
<evidence type="ECO:0000269" key="4">
    <source>
    </source>
</evidence>
<evidence type="ECO:0000269" key="5">
    <source>
    </source>
</evidence>
<evidence type="ECO:0000269" key="6">
    <source>
    </source>
</evidence>
<evidence type="ECO:0000269" key="7">
    <source>
    </source>
</evidence>
<evidence type="ECO:0000269" key="8">
    <source>
    </source>
</evidence>
<evidence type="ECO:0000269" key="9">
    <source>
    </source>
</evidence>
<evidence type="ECO:0000303" key="10">
    <source>
    </source>
</evidence>
<evidence type="ECO:0000303" key="11">
    <source ref="1"/>
</evidence>
<evidence type="ECO:0000305" key="12"/>
<evidence type="ECO:0000312" key="13">
    <source>
        <dbReference type="HGNC" id="HGNC:30372"/>
    </source>
</evidence>
<evidence type="ECO:0007829" key="14">
    <source>
        <dbReference type="PDB" id="4ASC"/>
    </source>
</evidence>
<keyword id="KW-0002">3D-structure</keyword>
<keyword id="KW-0025">Alternative splicing</keyword>
<keyword id="KW-0963">Cytoplasm</keyword>
<keyword id="KW-0217">Developmental protein</keyword>
<keyword id="KW-0225">Disease variant</keyword>
<keyword id="KW-0880">Kelch repeat</keyword>
<keyword id="KW-1057">Nemaline myopathy</keyword>
<keyword id="KW-1267">Proteomics identification</keyword>
<keyword id="KW-1185">Reference proteome</keyword>
<keyword id="KW-0677">Repeat</keyword>
<keyword id="KW-0833">Ubl conjugation pathway</keyword>
<gene>
    <name evidence="13" type="primary">KLHL40</name>
    <name type="synonym">KBTBD5</name>
    <name evidence="11" type="synonym">SRYP</name>
</gene>
<feature type="chain" id="PRO_0000274235" description="Kelch-like protein 40">
    <location>
        <begin position="1"/>
        <end position="621"/>
    </location>
</feature>
<feature type="domain" description="BTB" evidence="2">
    <location>
        <begin position="33"/>
        <end position="98"/>
    </location>
</feature>
<feature type="domain" description="BACK">
    <location>
        <begin position="133"/>
        <end position="239"/>
    </location>
</feature>
<feature type="repeat" description="Kelch 1">
    <location>
        <begin position="360"/>
        <end position="412"/>
    </location>
</feature>
<feature type="repeat" description="Kelch 2">
    <location>
        <begin position="413"/>
        <end position="462"/>
    </location>
</feature>
<feature type="repeat" description="Kelch 3">
    <location>
        <begin position="463"/>
        <end position="510"/>
    </location>
</feature>
<feature type="repeat" description="Kelch 4">
    <location>
        <begin position="512"/>
        <end position="557"/>
    </location>
</feature>
<feature type="repeat" description="Kelch 5">
    <location>
        <begin position="559"/>
        <end position="613"/>
    </location>
</feature>
<feature type="region of interest" description="Disordered" evidence="3">
    <location>
        <begin position="265"/>
        <end position="295"/>
    </location>
</feature>
<feature type="compositionally biased region" description="Basic and acidic residues" evidence="3">
    <location>
        <begin position="275"/>
        <end position="292"/>
    </location>
</feature>
<feature type="splice variant" id="VSP_022681" description="In isoform 2." evidence="10">
    <original>ESDPLPYVVYGHTVLSHMDLVYVIGGKGSDRKCLNKMCVYDPKKFEWKELAPMQTARSLFGATVHDGRIIVAAGVTDTGLTSSAEVYSITDNKWAPFEAFPQERSSLSLVSLVGTLYAIGGFATLETESGELVPTELNDIWRYNEEEKKWEGVLREIAYAA</original>
    <variation>HRHRADQFCRSVQHHRQQVGTLRGLPTGA</variation>
    <location>
        <begin position="444"/>
        <end position="604"/>
    </location>
</feature>
<feature type="splice variant" id="VSP_022682" description="In isoform 2." evidence="10">
    <location>
        <begin position="605"/>
        <end position="621"/>
    </location>
</feature>
<feature type="sequence variant" id="VAR_069836" description="In NEM8; dbSNP:rs778565563." evidence="6">
    <original>D</original>
    <variation>H</variation>
    <location>
        <position position="34"/>
    </location>
</feature>
<feature type="sequence variant" id="VAR_069837" description="In NEM8." evidence="6">
    <original>L</original>
    <variation>P</variation>
    <location>
        <position position="86"/>
    </location>
</feature>
<feature type="sequence variant" id="VAR_069838" description="In NEM8; dbSNP:rs1250586231." evidence="6">
    <original>V</original>
    <variation>E</variation>
    <location>
        <position position="194"/>
    </location>
</feature>
<feature type="sequence variant" id="VAR_077950" description="In NEM8." evidence="9">
    <location>
        <begin position="201"/>
        <end position="621"/>
    </location>
</feature>
<feature type="sequence variant" id="VAR_069839" description="In NEM8; dbSNP:rs397509420." evidence="6">
    <original>W</original>
    <variation>L</variation>
    <location>
        <position position="201"/>
    </location>
</feature>
<feature type="sequence variant" id="VAR_069840" description="In NEM8; dbSNP:rs774887948." evidence="6">
    <original>R</original>
    <variation>L</variation>
    <location>
        <position position="311"/>
    </location>
</feature>
<feature type="sequence variant" id="VAR_030214" description="In dbSNP:rs6805421." evidence="4 5">
    <original>N</original>
    <variation>S</variation>
    <location>
        <position position="345"/>
    </location>
</feature>
<feature type="sequence variant" id="VAR_069841" description="In NEM8; dbSNP:rs773649133." evidence="6">
    <original>P</original>
    <variation>L</variation>
    <location>
        <position position="397"/>
    </location>
</feature>
<feature type="sequence variant" id="VAR_069842" description="In NEM8; dbSNP:rs770866675." evidence="6">
    <original>H</original>
    <variation>R</variation>
    <location>
        <position position="455"/>
    </location>
</feature>
<feature type="sequence variant" id="VAR_069843" description="In NEM8; dbSNP:rs367579275." evidence="6">
    <original>G</original>
    <variation>C</variation>
    <location>
        <position position="469"/>
    </location>
</feature>
<feature type="sequence variant" id="VAR_077951" description="In NEM8; uncertain significance; dbSNP:rs758188096." evidence="8">
    <original>R</original>
    <variation>C</variation>
    <location>
        <position position="500"/>
    </location>
</feature>
<feature type="sequence variant" id="VAR_077952" description="In NEM8." evidence="7">
    <original>A</original>
    <variation>P</variation>
    <location>
        <position position="505"/>
    </location>
</feature>
<feature type="sequence variant" id="VAR_069844" description="In NEM8; dbSNP:rs778022582." evidence="6 9">
    <original>T</original>
    <variation>P</variation>
    <location>
        <position position="506"/>
    </location>
</feature>
<feature type="sequence variant" id="VAR_069845" description="In NEM8; dbSNP:rs397509419." evidence="6">
    <original>E</original>
    <variation>K</variation>
    <location>
        <position position="528"/>
    </location>
</feature>
<feature type="sequence variant" id="VAR_069846" description="In NEM8; dbSNP:rs397509421." evidence="6">
    <original>A</original>
    <variation>P</variation>
    <location>
        <position position="538"/>
    </location>
</feature>
<feature type="sequence variant" id="VAR_069847" description="In NEM8; dbSNP:rs201856772." evidence="6">
    <original>E</original>
    <variation>K</variation>
    <location>
        <position position="588"/>
    </location>
</feature>
<feature type="sequence variant" id="VAR_030215" description="In dbSNP:rs123509." evidence="5">
    <original>C</original>
    <variation>R</variation>
    <location>
        <position position="617"/>
    </location>
</feature>
<feature type="strand" evidence="14">
    <location>
        <begin position="317"/>
        <end position="324"/>
    </location>
</feature>
<feature type="strand" evidence="14">
    <location>
        <begin position="327"/>
        <end position="332"/>
    </location>
</feature>
<feature type="turn" evidence="14">
    <location>
        <begin position="333"/>
        <end position="336"/>
    </location>
</feature>
<feature type="strand" evidence="14">
    <location>
        <begin position="337"/>
        <end position="342"/>
    </location>
</feature>
<feature type="strand" evidence="14">
    <location>
        <begin position="349"/>
        <end position="355"/>
    </location>
</feature>
<feature type="strand" evidence="14">
    <location>
        <begin position="361"/>
        <end position="369"/>
    </location>
</feature>
<feature type="strand" evidence="14">
    <location>
        <begin position="374"/>
        <end position="376"/>
    </location>
</feature>
<feature type="strand" evidence="14">
    <location>
        <begin position="378"/>
        <end position="386"/>
    </location>
</feature>
<feature type="turn" evidence="14">
    <location>
        <begin position="387"/>
        <end position="390"/>
    </location>
</feature>
<feature type="strand" evidence="14">
    <location>
        <begin position="391"/>
        <end position="394"/>
    </location>
</feature>
<feature type="strand" evidence="14">
    <location>
        <begin position="398"/>
        <end position="400"/>
    </location>
</feature>
<feature type="strand" evidence="14">
    <location>
        <begin position="402"/>
        <end position="404"/>
    </location>
</feature>
<feature type="strand" evidence="14">
    <location>
        <begin position="406"/>
        <end position="410"/>
    </location>
</feature>
<feature type="strand" evidence="14">
    <location>
        <begin position="413"/>
        <end position="417"/>
    </location>
</feature>
<feature type="strand" evidence="14">
    <location>
        <begin position="420"/>
        <end position="423"/>
    </location>
</feature>
<feature type="strand" evidence="14">
    <location>
        <begin position="432"/>
        <end position="436"/>
    </location>
</feature>
<feature type="turn" evidence="14">
    <location>
        <begin position="437"/>
        <end position="440"/>
    </location>
</feature>
<feature type="strand" evidence="14">
    <location>
        <begin position="441"/>
        <end position="444"/>
    </location>
</feature>
<feature type="strand" evidence="14">
    <location>
        <begin position="456"/>
        <end position="460"/>
    </location>
</feature>
<feature type="strand" evidence="14">
    <location>
        <begin position="463"/>
        <end position="467"/>
    </location>
</feature>
<feature type="strand" evidence="14">
    <location>
        <begin position="480"/>
        <end position="484"/>
    </location>
</feature>
<feature type="turn" evidence="14">
    <location>
        <begin position="485"/>
        <end position="488"/>
    </location>
</feature>
<feature type="strand" evidence="14">
    <location>
        <begin position="489"/>
        <end position="492"/>
    </location>
</feature>
<feature type="strand" evidence="14">
    <location>
        <begin position="504"/>
        <end position="508"/>
    </location>
</feature>
<feature type="strand" evidence="14">
    <location>
        <begin position="511"/>
        <end position="518"/>
    </location>
</feature>
<feature type="strand" evidence="14">
    <location>
        <begin position="520"/>
        <end position="531"/>
    </location>
</feature>
<feature type="turn" evidence="14">
    <location>
        <begin position="532"/>
        <end position="535"/>
    </location>
</feature>
<feature type="strand" evidence="14">
    <location>
        <begin position="536"/>
        <end position="540"/>
    </location>
</feature>
<feature type="strand" evidence="14">
    <location>
        <begin position="551"/>
        <end position="555"/>
    </location>
</feature>
<feature type="strand" evidence="14">
    <location>
        <begin position="558"/>
        <end position="569"/>
    </location>
</feature>
<feature type="strand" evidence="14">
    <location>
        <begin position="575"/>
        <end position="587"/>
    </location>
</feature>
<feature type="turn" evidence="14">
    <location>
        <begin position="588"/>
        <end position="591"/>
    </location>
</feature>
<feature type="strand" evidence="14">
    <location>
        <begin position="592"/>
        <end position="598"/>
    </location>
</feature>
<feature type="strand" evidence="14">
    <location>
        <begin position="607"/>
        <end position="613"/>
    </location>
</feature>
<feature type="helix" evidence="14">
    <location>
        <begin position="615"/>
        <end position="617"/>
    </location>
</feature>
<feature type="strand" evidence="14">
    <location>
        <begin position="618"/>
        <end position="620"/>
    </location>
</feature>
<dbReference type="EMBL" id="AY177390">
    <property type="protein sequence ID" value="AAO06908.1"/>
    <property type="molecule type" value="mRNA"/>
</dbReference>
<dbReference type="EMBL" id="AY176040">
    <property type="protein sequence ID" value="AAO22141.1"/>
    <property type="molecule type" value="mRNA"/>
</dbReference>
<dbReference type="EMBL" id="AK056577">
    <property type="protein sequence ID" value="BAB71222.1"/>
    <property type="molecule type" value="mRNA"/>
</dbReference>
<dbReference type="EMBL" id="BC110491">
    <property type="protein sequence ID" value="AAI10492.1"/>
    <property type="molecule type" value="mRNA"/>
</dbReference>
<dbReference type="CCDS" id="CCDS2703.1">
    <molecule id="Q2TBA0-1"/>
</dbReference>
<dbReference type="RefSeq" id="NP_689606.2">
    <molecule id="Q2TBA0-1"/>
    <property type="nucleotide sequence ID" value="NM_152393.3"/>
</dbReference>
<dbReference type="PDB" id="4ASC">
    <property type="method" value="X-ray"/>
    <property type="resolution" value="1.78 A"/>
    <property type="chains" value="A=314-621"/>
</dbReference>
<dbReference type="PDBsum" id="4ASC"/>
<dbReference type="SMR" id="Q2TBA0"/>
<dbReference type="BioGRID" id="126278">
    <property type="interactions" value="71"/>
</dbReference>
<dbReference type="ComplexPortal" id="CPX-8261">
    <property type="entry name" value="CRL3 E3 ubiquitin ligase complex, KLHL40 variant"/>
</dbReference>
<dbReference type="FunCoup" id="Q2TBA0">
    <property type="interactions" value="71"/>
</dbReference>
<dbReference type="IntAct" id="Q2TBA0">
    <property type="interactions" value="39"/>
</dbReference>
<dbReference type="MINT" id="Q2TBA0"/>
<dbReference type="STRING" id="9606.ENSP00000287777"/>
<dbReference type="iPTMnet" id="Q2TBA0"/>
<dbReference type="PhosphoSitePlus" id="Q2TBA0"/>
<dbReference type="BioMuta" id="KLHL40"/>
<dbReference type="DMDM" id="125950763"/>
<dbReference type="MassIVE" id="Q2TBA0"/>
<dbReference type="PaxDb" id="9606-ENSP00000287777"/>
<dbReference type="PeptideAtlas" id="Q2TBA0"/>
<dbReference type="ProteomicsDB" id="61486">
    <molecule id="Q2TBA0-1"/>
</dbReference>
<dbReference type="ProteomicsDB" id="61487">
    <molecule id="Q2TBA0-2"/>
</dbReference>
<dbReference type="Antibodypedia" id="12393">
    <property type="antibodies" value="106 antibodies from 19 providers"/>
</dbReference>
<dbReference type="DNASU" id="131377"/>
<dbReference type="Ensembl" id="ENST00000287777.5">
    <molecule id="Q2TBA0-1"/>
    <property type="protein sequence ID" value="ENSP00000287777.4"/>
    <property type="gene ID" value="ENSG00000157119.12"/>
</dbReference>
<dbReference type="GeneID" id="131377"/>
<dbReference type="KEGG" id="hsa:131377"/>
<dbReference type="MANE-Select" id="ENST00000287777.5">
    <property type="protein sequence ID" value="ENSP00000287777.4"/>
    <property type="RefSeq nucleotide sequence ID" value="NM_152393.4"/>
    <property type="RefSeq protein sequence ID" value="NP_689606.2"/>
</dbReference>
<dbReference type="UCSC" id="uc003clv.2">
    <molecule id="Q2TBA0-1"/>
    <property type="organism name" value="human"/>
</dbReference>
<dbReference type="AGR" id="HGNC:30372"/>
<dbReference type="CTD" id="131377"/>
<dbReference type="DisGeNET" id="131377"/>
<dbReference type="GeneCards" id="KLHL40"/>
<dbReference type="HGNC" id="HGNC:30372">
    <property type="gene designation" value="KLHL40"/>
</dbReference>
<dbReference type="HPA" id="ENSG00000157119">
    <property type="expression patterns" value="Group enriched (skeletal muscle, tongue)"/>
</dbReference>
<dbReference type="MalaCards" id="KLHL40"/>
<dbReference type="MIM" id="615340">
    <property type="type" value="gene"/>
</dbReference>
<dbReference type="MIM" id="615348">
    <property type="type" value="phenotype"/>
</dbReference>
<dbReference type="neXtProt" id="NX_Q2TBA0"/>
<dbReference type="OpenTargets" id="ENSG00000157119"/>
<dbReference type="Orphanet" id="171430">
    <property type="disease" value="Severe congenital nemaline myopathy"/>
</dbReference>
<dbReference type="PharmGKB" id="PA134908127"/>
<dbReference type="VEuPathDB" id="HostDB:ENSG00000157119"/>
<dbReference type="eggNOG" id="KOG4441">
    <property type="taxonomic scope" value="Eukaryota"/>
</dbReference>
<dbReference type="GeneTree" id="ENSGT00940000156360"/>
<dbReference type="HOGENOM" id="CLU_004253_14_4_1"/>
<dbReference type="InParanoid" id="Q2TBA0"/>
<dbReference type="OMA" id="RNFACER"/>
<dbReference type="OrthoDB" id="6359816at2759"/>
<dbReference type="PAN-GO" id="Q2TBA0">
    <property type="GO annotations" value="5 GO annotations based on evolutionary models"/>
</dbReference>
<dbReference type="PhylomeDB" id="Q2TBA0"/>
<dbReference type="TreeFam" id="TF351653"/>
<dbReference type="PathwayCommons" id="Q2TBA0"/>
<dbReference type="SignaLink" id="Q2TBA0"/>
<dbReference type="BioGRID-ORCS" id="131377">
    <property type="hits" value="14 hits in 1183 CRISPR screens"/>
</dbReference>
<dbReference type="ChiTaRS" id="KLHL40">
    <property type="organism name" value="human"/>
</dbReference>
<dbReference type="EvolutionaryTrace" id="Q2TBA0"/>
<dbReference type="GenomeRNAi" id="131377"/>
<dbReference type="Pharos" id="Q2TBA0">
    <property type="development level" value="Tbio"/>
</dbReference>
<dbReference type="PRO" id="PR:Q2TBA0"/>
<dbReference type="Proteomes" id="UP000005640">
    <property type="component" value="Chromosome 3"/>
</dbReference>
<dbReference type="RNAct" id="Q2TBA0">
    <property type="molecule type" value="protein"/>
</dbReference>
<dbReference type="Bgee" id="ENSG00000157119">
    <property type="expression patterns" value="Expressed in gastrocnemius and 84 other cell types or tissues"/>
</dbReference>
<dbReference type="GO" id="GO:0031672">
    <property type="term" value="C:A band"/>
    <property type="evidence" value="ECO:0000318"/>
    <property type="project" value="GO_Central"/>
</dbReference>
<dbReference type="GO" id="GO:0031463">
    <property type="term" value="C:Cul3-RING ubiquitin ligase complex"/>
    <property type="evidence" value="ECO:0000250"/>
    <property type="project" value="UniProtKB"/>
</dbReference>
<dbReference type="GO" id="GO:0005737">
    <property type="term" value="C:cytoplasm"/>
    <property type="evidence" value="ECO:0000250"/>
    <property type="project" value="UniProtKB"/>
</dbReference>
<dbReference type="GO" id="GO:0031674">
    <property type="term" value="C:I band"/>
    <property type="evidence" value="ECO:0000318"/>
    <property type="project" value="GO_Central"/>
</dbReference>
<dbReference type="GO" id="GO:1990756">
    <property type="term" value="F:ubiquitin-like ligase-substrate adaptor activity"/>
    <property type="evidence" value="ECO:0000318"/>
    <property type="project" value="GO_Central"/>
</dbReference>
<dbReference type="GO" id="GO:0032435">
    <property type="term" value="P:negative regulation of proteasomal ubiquitin-dependent protein catabolic process"/>
    <property type="evidence" value="ECO:0000318"/>
    <property type="project" value="GO_Central"/>
</dbReference>
<dbReference type="GO" id="GO:0031397">
    <property type="term" value="P:negative regulation of protein ubiquitination"/>
    <property type="evidence" value="ECO:0000318"/>
    <property type="project" value="GO_Central"/>
</dbReference>
<dbReference type="GO" id="GO:0032436">
    <property type="term" value="P:positive regulation of proteasomal ubiquitin-dependent protein catabolic process"/>
    <property type="evidence" value="ECO:0000250"/>
    <property type="project" value="UniProtKB"/>
</dbReference>
<dbReference type="GO" id="GO:0031398">
    <property type="term" value="P:positive regulation of protein ubiquitination"/>
    <property type="evidence" value="ECO:0000250"/>
    <property type="project" value="UniProtKB"/>
</dbReference>
<dbReference type="GO" id="GO:0043161">
    <property type="term" value="P:proteasome-mediated ubiquitin-dependent protein catabolic process"/>
    <property type="evidence" value="ECO:0000318"/>
    <property type="project" value="GO_Central"/>
</dbReference>
<dbReference type="GO" id="GO:0048741">
    <property type="term" value="P:skeletal muscle fiber development"/>
    <property type="evidence" value="ECO:0000250"/>
    <property type="project" value="UniProtKB"/>
</dbReference>
<dbReference type="GO" id="GO:0098528">
    <property type="term" value="P:skeletal muscle fiber differentiation"/>
    <property type="evidence" value="ECO:0000250"/>
    <property type="project" value="UniProtKB"/>
</dbReference>
<dbReference type="CDD" id="cd18340">
    <property type="entry name" value="BTB_POZ_KLHL40_KBTBD5"/>
    <property type="match status" value="1"/>
</dbReference>
<dbReference type="FunFam" id="3.30.710.10:FF:000006">
    <property type="entry name" value="Kelch repeat and BTB domain-containing 6"/>
    <property type="match status" value="1"/>
</dbReference>
<dbReference type="FunFam" id="1.25.40.420:FF:000001">
    <property type="entry name" value="Kelch-like family member 12"/>
    <property type="match status" value="1"/>
</dbReference>
<dbReference type="FunFam" id="2.120.10.80:FF:000037">
    <property type="entry name" value="Kelch-like family member 40"/>
    <property type="match status" value="1"/>
</dbReference>
<dbReference type="Gene3D" id="1.25.40.420">
    <property type="match status" value="1"/>
</dbReference>
<dbReference type="Gene3D" id="2.120.10.80">
    <property type="entry name" value="Kelch-type beta propeller"/>
    <property type="match status" value="1"/>
</dbReference>
<dbReference type="Gene3D" id="3.30.710.10">
    <property type="entry name" value="Potassium Channel Kv1.1, Chain A"/>
    <property type="match status" value="1"/>
</dbReference>
<dbReference type="InterPro" id="IPR011705">
    <property type="entry name" value="BACK"/>
</dbReference>
<dbReference type="InterPro" id="IPR017096">
    <property type="entry name" value="BTB-kelch_protein"/>
</dbReference>
<dbReference type="InterPro" id="IPR000210">
    <property type="entry name" value="BTB/POZ_dom"/>
</dbReference>
<dbReference type="InterPro" id="IPR015915">
    <property type="entry name" value="Kelch-typ_b-propeller"/>
</dbReference>
<dbReference type="InterPro" id="IPR006652">
    <property type="entry name" value="Kelch_1"/>
</dbReference>
<dbReference type="InterPro" id="IPR030607">
    <property type="entry name" value="KLHL40_BTB/POZ_dom"/>
</dbReference>
<dbReference type="InterPro" id="IPR011333">
    <property type="entry name" value="SKP1/BTB/POZ_sf"/>
</dbReference>
<dbReference type="PANTHER" id="PTHR24412">
    <property type="entry name" value="KELCH PROTEIN"/>
    <property type="match status" value="1"/>
</dbReference>
<dbReference type="PANTHER" id="PTHR24412:SF22">
    <property type="entry name" value="KELCH-LIKE PROTEIN 40"/>
    <property type="match status" value="1"/>
</dbReference>
<dbReference type="Pfam" id="PF07707">
    <property type="entry name" value="BACK"/>
    <property type="match status" value="1"/>
</dbReference>
<dbReference type="Pfam" id="PF00651">
    <property type="entry name" value="BTB"/>
    <property type="match status" value="1"/>
</dbReference>
<dbReference type="Pfam" id="PF24681">
    <property type="entry name" value="Kelch_KLHDC2_KLHL20_DRC7"/>
    <property type="match status" value="1"/>
</dbReference>
<dbReference type="PIRSF" id="PIRSF037037">
    <property type="entry name" value="Kelch-like_protein_gigaxonin"/>
    <property type="match status" value="1"/>
</dbReference>
<dbReference type="SMART" id="SM00875">
    <property type="entry name" value="BACK"/>
    <property type="match status" value="1"/>
</dbReference>
<dbReference type="SMART" id="SM00225">
    <property type="entry name" value="BTB"/>
    <property type="match status" value="1"/>
</dbReference>
<dbReference type="SMART" id="SM00612">
    <property type="entry name" value="Kelch"/>
    <property type="match status" value="4"/>
</dbReference>
<dbReference type="SUPFAM" id="SSF117281">
    <property type="entry name" value="Kelch motif"/>
    <property type="match status" value="1"/>
</dbReference>
<dbReference type="SUPFAM" id="SSF54695">
    <property type="entry name" value="POZ domain"/>
    <property type="match status" value="1"/>
</dbReference>
<dbReference type="PROSITE" id="PS50097">
    <property type="entry name" value="BTB"/>
    <property type="match status" value="1"/>
</dbReference>
<organism>
    <name type="scientific">Homo sapiens</name>
    <name type="common">Human</name>
    <dbReference type="NCBI Taxonomy" id="9606"/>
    <lineage>
        <taxon>Eukaryota</taxon>
        <taxon>Metazoa</taxon>
        <taxon>Chordata</taxon>
        <taxon>Craniata</taxon>
        <taxon>Vertebrata</taxon>
        <taxon>Euteleostomi</taxon>
        <taxon>Mammalia</taxon>
        <taxon>Eutheria</taxon>
        <taxon>Euarchontoglires</taxon>
        <taxon>Primates</taxon>
        <taxon>Haplorrhini</taxon>
        <taxon>Catarrhini</taxon>
        <taxon>Hominidae</taxon>
        <taxon>Homo</taxon>
    </lineage>
</organism>
<proteinExistence type="evidence at protein level"/>
<protein>
    <recommendedName>
        <fullName evidence="12">Kelch-like protein 40</fullName>
    </recommendedName>
    <alternativeName>
        <fullName>Kelch repeat and BTB domain-containing protein 5</fullName>
    </alternativeName>
    <alternativeName>
        <fullName evidence="11">Sarcosynapsin</fullName>
    </alternativeName>
</protein>
<reference key="1">
    <citation type="submission" date="2002-11" db="EMBL/GenBank/DDBJ databases">
        <title>Structure, gene organization and expression analysis of human sarcosynapsin.</title>
        <authorList>
            <person name="Goudou D."/>
            <person name="Bitoun M."/>
            <person name="Rieger F."/>
            <person name="Perin J.-P."/>
            <person name="Alliel P.M."/>
        </authorList>
    </citation>
    <scope>NUCLEOTIDE SEQUENCE [MRNA] (ISOFORM 1)</scope>
    <source>
        <tissue>Heart</tissue>
    </source>
</reference>
<reference key="2">
    <citation type="journal article" date="2004" name="Nat. Genet.">
        <title>Complete sequencing and characterization of 21,243 full-length human cDNAs.</title>
        <authorList>
            <person name="Ota T."/>
            <person name="Suzuki Y."/>
            <person name="Nishikawa T."/>
            <person name="Otsuki T."/>
            <person name="Sugiyama T."/>
            <person name="Irie R."/>
            <person name="Wakamatsu A."/>
            <person name="Hayashi K."/>
            <person name="Sato H."/>
            <person name="Nagai K."/>
            <person name="Kimura K."/>
            <person name="Makita H."/>
            <person name="Sekine M."/>
            <person name="Obayashi M."/>
            <person name="Nishi T."/>
            <person name="Shibahara T."/>
            <person name="Tanaka T."/>
            <person name="Ishii S."/>
            <person name="Yamamoto J."/>
            <person name="Saito K."/>
            <person name="Kawai Y."/>
            <person name="Isono Y."/>
            <person name="Nakamura Y."/>
            <person name="Nagahari K."/>
            <person name="Murakami K."/>
            <person name="Yasuda T."/>
            <person name="Iwayanagi T."/>
            <person name="Wagatsuma M."/>
            <person name="Shiratori A."/>
            <person name="Sudo H."/>
            <person name="Hosoiri T."/>
            <person name="Kaku Y."/>
            <person name="Kodaira H."/>
            <person name="Kondo H."/>
            <person name="Sugawara M."/>
            <person name="Takahashi M."/>
            <person name="Kanda K."/>
            <person name="Yokoi T."/>
            <person name="Furuya T."/>
            <person name="Kikkawa E."/>
            <person name="Omura Y."/>
            <person name="Abe K."/>
            <person name="Kamihara K."/>
            <person name="Katsuta N."/>
            <person name="Sato K."/>
            <person name="Tanikawa M."/>
            <person name="Yamazaki M."/>
            <person name="Ninomiya K."/>
            <person name="Ishibashi T."/>
            <person name="Yamashita H."/>
            <person name="Murakawa K."/>
            <person name="Fujimori K."/>
            <person name="Tanai H."/>
            <person name="Kimata M."/>
            <person name="Watanabe M."/>
            <person name="Hiraoka S."/>
            <person name="Chiba Y."/>
            <person name="Ishida S."/>
            <person name="Ono Y."/>
            <person name="Takiguchi S."/>
            <person name="Watanabe S."/>
            <person name="Yosida M."/>
            <person name="Hotuta T."/>
            <person name="Kusano J."/>
            <person name="Kanehori K."/>
            <person name="Takahashi-Fujii A."/>
            <person name="Hara H."/>
            <person name="Tanase T.-O."/>
            <person name="Nomura Y."/>
            <person name="Togiya S."/>
            <person name="Komai F."/>
            <person name="Hara R."/>
            <person name="Takeuchi K."/>
            <person name="Arita M."/>
            <person name="Imose N."/>
            <person name="Musashino K."/>
            <person name="Yuuki H."/>
            <person name="Oshima A."/>
            <person name="Sasaki N."/>
            <person name="Aotsuka S."/>
            <person name="Yoshikawa Y."/>
            <person name="Matsunawa H."/>
            <person name="Ichihara T."/>
            <person name="Shiohata N."/>
            <person name="Sano S."/>
            <person name="Moriya S."/>
            <person name="Momiyama H."/>
            <person name="Satoh N."/>
            <person name="Takami S."/>
            <person name="Terashima Y."/>
            <person name="Suzuki O."/>
            <person name="Nakagawa S."/>
            <person name="Senoh A."/>
            <person name="Mizoguchi H."/>
            <person name="Goto Y."/>
            <person name="Shimizu F."/>
            <person name="Wakebe H."/>
            <person name="Hishigaki H."/>
            <person name="Watanabe T."/>
            <person name="Sugiyama A."/>
            <person name="Takemoto M."/>
            <person name="Kawakami B."/>
            <person name="Yamazaki M."/>
            <person name="Watanabe K."/>
            <person name="Kumagai A."/>
            <person name="Itakura S."/>
            <person name="Fukuzumi Y."/>
            <person name="Fujimori Y."/>
            <person name="Komiyama M."/>
            <person name="Tashiro H."/>
            <person name="Tanigami A."/>
            <person name="Fujiwara T."/>
            <person name="Ono T."/>
            <person name="Yamada K."/>
            <person name="Fujii Y."/>
            <person name="Ozaki K."/>
            <person name="Hirao M."/>
            <person name="Ohmori Y."/>
            <person name="Kawabata A."/>
            <person name="Hikiji T."/>
            <person name="Kobatake N."/>
            <person name="Inagaki H."/>
            <person name="Ikema Y."/>
            <person name="Okamoto S."/>
            <person name="Okitani R."/>
            <person name="Kawakami T."/>
            <person name="Noguchi S."/>
            <person name="Itoh T."/>
            <person name="Shigeta K."/>
            <person name="Senba T."/>
            <person name="Matsumura K."/>
            <person name="Nakajima Y."/>
            <person name="Mizuno T."/>
            <person name="Morinaga M."/>
            <person name="Sasaki M."/>
            <person name="Togashi T."/>
            <person name="Oyama M."/>
            <person name="Hata H."/>
            <person name="Watanabe M."/>
            <person name="Komatsu T."/>
            <person name="Mizushima-Sugano J."/>
            <person name="Satoh T."/>
            <person name="Shirai Y."/>
            <person name="Takahashi Y."/>
            <person name="Nakagawa K."/>
            <person name="Okumura K."/>
            <person name="Nagase T."/>
            <person name="Nomura N."/>
            <person name="Kikuchi H."/>
            <person name="Masuho Y."/>
            <person name="Yamashita R."/>
            <person name="Nakai K."/>
            <person name="Yada T."/>
            <person name="Nakamura Y."/>
            <person name="Ohara O."/>
            <person name="Isogai T."/>
            <person name="Sugano S."/>
        </authorList>
    </citation>
    <scope>NUCLEOTIDE SEQUENCE [LARGE SCALE MRNA] (ISOFORM 2)</scope>
    <scope>VARIANT SER-345</scope>
    <source>
        <tissue>Tongue</tissue>
    </source>
</reference>
<reference key="3">
    <citation type="journal article" date="2004" name="Genome Res.">
        <title>The status, quality, and expansion of the NIH full-length cDNA project: the Mammalian Gene Collection (MGC).</title>
        <authorList>
            <consortium name="The MGC Project Team"/>
        </authorList>
    </citation>
    <scope>NUCLEOTIDE SEQUENCE [LARGE SCALE MRNA] (ISOFORM 1)</scope>
    <scope>VARIANTS SER-345 AND ARG-617</scope>
</reference>
<reference key="4">
    <citation type="journal article" date="2013" name="J. Biol. Chem.">
        <title>Structural basis for Cul3 assembly with the BTB-Kelch family of E3 ubiquitin ligases.</title>
        <authorList>
            <person name="Canning P."/>
            <person name="Cooper C.D."/>
            <person name="Krojer T."/>
            <person name="Murray J.W."/>
            <person name="Pike A.C."/>
            <person name="Chaikuad A."/>
            <person name="Keates T."/>
            <person name="Thangaratnarajah C."/>
            <person name="Hojzan V."/>
            <person name="Marsden B.D."/>
            <person name="Gileadi O."/>
            <person name="Knapp S."/>
            <person name="von Delft F."/>
            <person name="Bullock A.N."/>
        </authorList>
    </citation>
    <scope>X-RAY CRYSTALLOGRAPHY (1.78 ANGSTROMS) OF 314-621</scope>
</reference>
<reference key="5">
    <citation type="journal article" date="2013" name="Am. J. Hum. Genet.">
        <title>Mutations in KLHL40 are a frequent cause of severe autosomal-recessive nemaline myopathy.</title>
        <authorList>
            <person name="Ravenscroft G."/>
            <person name="Miyatake S."/>
            <person name="Lehtokari V.L."/>
            <person name="Todd E.J."/>
            <person name="Vornanen P."/>
            <person name="Yau K.S."/>
            <person name="Hayashi Y.K."/>
            <person name="Miyake N."/>
            <person name="Tsurusaki Y."/>
            <person name="Doi H."/>
            <person name="Saitsu H."/>
            <person name="Osaka H."/>
            <person name="Yamashita S."/>
            <person name="Ohya T."/>
            <person name="Sakamoto Y."/>
            <person name="Koshimizu E."/>
            <person name="Imamura S."/>
            <person name="Yamashita M."/>
            <person name="Ogata K."/>
            <person name="Shiina M."/>
            <person name="Bryson-Richardson R.J."/>
            <person name="Vaz R."/>
            <person name="Ceyhan O."/>
            <person name="Brownstein C.A."/>
            <person name="Swanson L.C."/>
            <person name="Monnot S."/>
            <person name="Romero N.B."/>
            <person name="Amthor H."/>
            <person name="Kresoje N."/>
            <person name="Sivadorai P."/>
            <person name="Kiraly-Borri C."/>
            <person name="Haliloglu G."/>
            <person name="Talim B."/>
            <person name="Orhan D."/>
            <person name="Kale G."/>
            <person name="Charles A.K."/>
            <person name="Fabian V.A."/>
            <person name="Davis M.R."/>
            <person name="Lammens M."/>
            <person name="Sewry C.A."/>
            <person name="Manzur A."/>
            <person name="Muntoni F."/>
            <person name="Clarke N.F."/>
            <person name="North K.N."/>
            <person name="Bertini E."/>
            <person name="Nevo Y."/>
            <person name="Willichowski E."/>
            <person name="Silberg I.E."/>
            <person name="Topaloglu H."/>
            <person name="Beggs A.H."/>
            <person name="Allcock R.J."/>
            <person name="Nishino I."/>
            <person name="Wallgren-Pettersson C."/>
            <person name="Matsumoto N."/>
            <person name="Laing N.G."/>
        </authorList>
    </citation>
    <scope>VARIANTS NEM8 HIS-34; PRO-86; GLU-194; LEU-201; LEU-311; LEU-397; ARG-455; CYS-469; PRO-506; LYS-528; PRO-538 AND LYS-588</scope>
    <scope>FUNCTION</scope>
    <scope>SUBCELLULAR LOCATION</scope>
    <scope>TISSUE SPECIFICITY</scope>
</reference>
<reference key="6">
    <citation type="journal article" date="2016" name="J. Neurol.">
        <title>KLHL40-related nemaline myopathy with a sustained, positive response to treatment with acetylcholinesterase inhibitors.</title>
        <authorList>
            <person name="Natera-de Benito D."/>
            <person name="Nascimento A."/>
            <person name="Abicht A."/>
            <person name="Ortez C."/>
            <person name="Jou C."/>
            <person name="Mueller J.S."/>
            <person name="Evangelista T."/>
            <person name="Toepf A."/>
            <person name="Thompson R."/>
            <person name="Jimenez-Mallebrera C."/>
            <person name="Colomer J."/>
            <person name="Lochmueller H."/>
        </authorList>
    </citation>
    <scope>VARIANT NEM8 PRO-505</scope>
</reference>
<reference key="7">
    <citation type="journal article" date="2016" name="Neuromuscul. Disord.">
        <title>Mild clinical presentation in KLHL40-related nemaline myopathy (NEM 8).</title>
        <authorList>
            <person name="Seferian A.M."/>
            <person name="Malfatti E."/>
            <person name="Bosson C."/>
            <person name="Pelletier L."/>
            <person name="Taytard J."/>
            <person name="Forin V."/>
            <person name="Gidaro T."/>
            <person name="Gargaun E."/>
            <person name="Carlier P."/>
            <person name="Faure J."/>
            <person name="Romero N.B."/>
            <person name="Rendu J."/>
            <person name="Servais L."/>
        </authorList>
    </citation>
    <scope>VARIANT NEM8 CYS-500</scope>
</reference>
<reference key="8">
    <citation type="journal article" date="2016" name="Prenat. Diagn.">
        <title>Identification of KLHL40 mutations by targeted next-generation sequencing facilitated a prenatal diagnosis in a family with three consecutive affected fetuses with fetal akinesia deformation sequence.</title>
        <authorList>
            <person name="Chen T.H."/>
            <person name="Tian X."/>
            <person name="Kuo P.L."/>
            <person name="Pan H.P."/>
            <person name="Wong L.C."/>
            <person name="Jong Y.J."/>
        </authorList>
    </citation>
    <scope>VARIANTS NEM8 201-TRP--MET-621 DEL AND PRO-506</scope>
</reference>
<sequence length="621" mass="69257">MALGLEQAEEQRLYQQTLLQDGLKDMLDHGKFLDCVVRAGEREFPCHRLVLAACSPYFRARFLAEPERAGELHLEEVSPDVVAQVLHYLYTSEIALDEASVQDLFAAAHRFQIPSIFTICVSFLQKRLCLSNCLAVFRLGLLLDCARLAVAARDFICAHFTLVARDADFLGLSADELIAIISSDGLNVEKEEAVFEAVMRWAGSGDAEAQAERQRALPTVFESVRCRLLPRAFLESRVERHPLVRAQPELLRKVQMVKDAHEGRITTLRKKKKGKDGAGAKEADKGTSKAKAEEDEEAERILPGILNDTLRFGMFLQDLIFMISEEGAVAYDPAANECYCASLSNQVPKNHVSLVTKENQVFVAGGLFYNEDNKEDPMSAYFLQFDHLDSEWLGMPPLPSPRCLFGLGEALNSIYVVGGREIKDGERCLDSVMCYDRLSFKWGESDPLPYVVYGHTVLSHMDLVYVIGGKGSDRKCLNKMCVYDPKKFEWKELAPMQTARSLFGATVHDGRIIVAAGVTDTGLTSSAEVYSITDNKWAPFEAFPQERSSLSLVSLVGTLYAIGGFATLETESGELVPTELNDIWRYNEEEKKWEGVLREIAYAAGATFLPVRLNVLCLTKM</sequence>
<comment type="function">
    <text evidence="1 6">Substrate-specific adapter of a BCR (BTB-CUL3-RBX1) E3 ubiquitin ligase complex that acts as a key regulator of skeletal muscle development (PubMed:23746549). The BCR(KLHL40) complex acts by mediating ubiquitination and degradation of TFDP1, thereby regulating the activity of the E2F:DP transcription factor complex (By similarity). Promotes stabilization of LMOD3 by acting as a negative regulator of LMOD3 ubiquitination; the molecular process by which it negatively regulates ubiquitination of LMOD3 is however unclear (By similarity).</text>
</comment>
<comment type="subunit">
    <text evidence="1">Component of the BCR(KLHL40) E3 ubiquitin ligase complex, at least composed of CUL3, KLHL40 and RBX1. Interacts with LMOD3.</text>
</comment>
<comment type="interaction">
    <interactant intactId="EBI-7851314">
        <id>Q2TBA0</id>
    </interactant>
    <interactant intactId="EBI-5661036">
        <id>A1L4K1</id>
        <label>FSD2</label>
    </interactant>
    <organismsDiffer>false</organismsDiffer>
    <experiments>3</experiments>
</comment>
<comment type="interaction">
    <interactant intactId="EBI-7851314">
        <id>Q2TBA0</id>
    </interactant>
    <interactant intactId="EBI-10233517">
        <id>Q7L590-2</id>
        <label>MCM10</label>
    </interactant>
    <organismsDiffer>false</organismsDiffer>
    <experiments>4</experiments>
</comment>
<comment type="interaction">
    <interactant intactId="EBI-7851314">
        <id>Q2TBA0</id>
    </interactant>
    <interactant intactId="EBI-3957636">
        <id>Q8IYX7</id>
        <label>SAXO1</label>
    </interactant>
    <organismsDiffer>false</organismsDiffer>
    <experiments>3</experiments>
</comment>
<comment type="interaction">
    <interactant intactId="EBI-7851314">
        <id>Q2TBA0</id>
    </interactant>
    <interactant intactId="EBI-745958">
        <id>Q5VWN6</id>
        <label>TASOR2</label>
    </interactant>
    <organismsDiffer>false</organismsDiffer>
    <experiments>3</experiments>
</comment>
<comment type="subcellular location">
    <subcellularLocation>
        <location evidence="1">Cytoplasm</location>
    </subcellularLocation>
    <subcellularLocation>
        <location evidence="6">Cytoplasm</location>
        <location evidence="6">Myofibril</location>
        <location evidence="6">Sarcomere</location>
        <location evidence="6">A band</location>
    </subcellularLocation>
    <subcellularLocation>
        <location evidence="1">Cytoplasm</location>
        <location evidence="1">Myofibril</location>
        <location evidence="1">Sarcomere</location>
        <location evidence="1">I band</location>
    </subcellularLocation>
</comment>
<comment type="alternative products">
    <event type="alternative splicing"/>
    <isoform>
        <id>Q2TBA0-1</id>
        <name>1</name>
        <sequence type="displayed"/>
    </isoform>
    <isoform>
        <id>Q2TBA0-2</id>
        <name>2</name>
        <sequence type="described" ref="VSP_022681 VSP_022682"/>
    </isoform>
</comment>
<comment type="tissue specificity">
    <text evidence="6">Highly expressed in fetal (19, 23 and 31 weeks of gestation) and adult skeletal muscle; expression levels tend to be higher in fetal compared to postnatal muscles (at protein level). Also expressed in fetal and adult heart.</text>
</comment>
<comment type="disease" evidence="6 7 8 9">
    <disease id="DI-03802">
        <name>Nemaline myopathy 8</name>
        <acronym>NEM8</acronym>
        <description>A severe form of nemaline myopathy. Nemaline myopathies are muscular disorders characterized by muscle weakness of varying severity and onset, and abnormal thread-like or rod-shaped structures in muscle fibers on histologic examination. NEM8 is characterized by fetal akinesia or hypokinesia, followed by contractures, fractures, respiratory failure, and swallowing difficulties apparent at birth. Most patients die in infancy. Skeletal muscle biopsy shows numerous small nemaline bodies, often with no normal myofibrils.</description>
        <dbReference type="MIM" id="615348"/>
    </disease>
    <text>The disease is caused by variants affecting the gene represented in this entry.</text>
</comment>
<comment type="similarity">
    <text evidence="12">Belongs to the KLHL40 family.</text>
</comment>
<accession>Q2TBA0</accession>
<accession>Q86SI1</accession>
<accession>Q96MR2</accession>
<name>KLH40_HUMAN</name>